<evidence type="ECO:0000255" key="1">
    <source>
        <dbReference type="HAMAP-Rule" id="MF_01698"/>
    </source>
</evidence>
<protein>
    <recommendedName>
        <fullName evidence="1">Mycothiol acetyltransferase</fullName>
        <shortName evidence="1">MSH acetyltransferase</shortName>
        <ecNumber evidence="1">2.3.1.189</ecNumber>
    </recommendedName>
    <alternativeName>
        <fullName evidence="1">Mycothiol synthase</fullName>
    </alternativeName>
</protein>
<gene>
    <name evidence="1" type="primary">mshD</name>
    <name type="ordered locus">Caci_8254</name>
</gene>
<sequence length="314" mass="34116">MTGISIGVVRRPNEADVATIRSLAEAAERADGVAPLPEQVLLHLKRSGDADADADTDAWHFVARRLSPQGSELTGYAFLDKSNAEEGPTAEVVVLPDARRQGVGGALLDALRMKVRRGDKPIRVWSHGALPAAAALAAKRGLEPVRELWVMSRPLADVPPAPTPPDGIRIATFRPGVDDEAWVEVNARAFAHHPEQGSMTVQDLRDRMAEPWFDPEGFFLAWRGAKLAGFHWTKVHDHSAYGDGPVGEVYVVGLDPAEQGHGLGRTLTEVGLRHLHDRGLGEVILYVEADNTPAVAVYTKLGFTRRSADVMYQL</sequence>
<feature type="chain" id="PRO_0000400243" description="Mycothiol acetyltransferase">
    <location>
        <begin position="1"/>
        <end position="314"/>
    </location>
</feature>
<feature type="domain" description="N-acetyltransferase 1" evidence="1">
    <location>
        <begin position="18"/>
        <end position="156"/>
    </location>
</feature>
<feature type="domain" description="N-acetyltransferase 2" evidence="1">
    <location>
        <begin position="168"/>
        <end position="314"/>
    </location>
</feature>
<feature type="binding site" evidence="1">
    <location>
        <position position="38"/>
    </location>
    <ligand>
        <name>1D-myo-inositol 2-(L-cysteinylamino)-2-deoxy-alpha-D-glucopyranoside</name>
        <dbReference type="ChEBI" id="CHEBI:58887"/>
    </ligand>
</feature>
<feature type="binding site" evidence="1">
    <location>
        <begin position="92"/>
        <end position="94"/>
    </location>
    <ligand>
        <name>acetyl-CoA</name>
        <dbReference type="ChEBI" id="CHEBI:57288"/>
        <label>1</label>
    </ligand>
</feature>
<feature type="binding site" evidence="1">
    <location>
        <position position="195"/>
    </location>
    <ligand>
        <name>1D-myo-inositol 2-(L-cysteinylamino)-2-deoxy-alpha-D-glucopyranoside</name>
        <dbReference type="ChEBI" id="CHEBI:58887"/>
    </ligand>
</feature>
<feature type="binding site" evidence="1">
    <location>
        <position position="234"/>
    </location>
    <ligand>
        <name>1D-myo-inositol 2-(L-cysteinylamino)-2-deoxy-alpha-D-glucopyranoside</name>
        <dbReference type="ChEBI" id="CHEBI:58887"/>
    </ligand>
</feature>
<feature type="binding site" evidence="1">
    <location>
        <position position="248"/>
    </location>
    <ligand>
        <name>1D-myo-inositol 2-(L-cysteinylamino)-2-deoxy-alpha-D-glucopyranoside</name>
        <dbReference type="ChEBI" id="CHEBI:58887"/>
    </ligand>
</feature>
<feature type="binding site" evidence="1">
    <location>
        <begin position="252"/>
        <end position="254"/>
    </location>
    <ligand>
        <name>acetyl-CoA</name>
        <dbReference type="ChEBI" id="CHEBI:57288"/>
        <label>2</label>
    </ligand>
</feature>
<feature type="binding site" evidence="1">
    <location>
        <begin position="259"/>
        <end position="265"/>
    </location>
    <ligand>
        <name>acetyl-CoA</name>
        <dbReference type="ChEBI" id="CHEBI:57288"/>
        <label>2</label>
    </ligand>
</feature>
<feature type="binding site" evidence="1">
    <location>
        <position position="286"/>
    </location>
    <ligand>
        <name>1D-myo-inositol 2-(L-cysteinylamino)-2-deoxy-alpha-D-glucopyranoside</name>
        <dbReference type="ChEBI" id="CHEBI:58887"/>
    </ligand>
</feature>
<accession>C7QKH8</accession>
<dbReference type="EC" id="2.3.1.189" evidence="1"/>
<dbReference type="EMBL" id="CP001700">
    <property type="protein sequence ID" value="ACU77077.1"/>
    <property type="molecule type" value="Genomic_DNA"/>
</dbReference>
<dbReference type="RefSeq" id="WP_015796802.1">
    <property type="nucleotide sequence ID" value="NC_013131.1"/>
</dbReference>
<dbReference type="SMR" id="C7QKH8"/>
<dbReference type="STRING" id="479433.Caci_8254"/>
<dbReference type="KEGG" id="cai:Caci_8254"/>
<dbReference type="eggNOG" id="COG0456">
    <property type="taxonomic scope" value="Bacteria"/>
</dbReference>
<dbReference type="HOGENOM" id="CLU_068014_0_0_11"/>
<dbReference type="InParanoid" id="C7QKH8"/>
<dbReference type="OrthoDB" id="3208058at2"/>
<dbReference type="Proteomes" id="UP000000851">
    <property type="component" value="Chromosome"/>
</dbReference>
<dbReference type="GO" id="GO:0035447">
    <property type="term" value="F:mycothiol synthase activity"/>
    <property type="evidence" value="ECO:0007669"/>
    <property type="project" value="UniProtKB-UniRule"/>
</dbReference>
<dbReference type="GO" id="GO:0010125">
    <property type="term" value="P:mycothiol biosynthetic process"/>
    <property type="evidence" value="ECO:0007669"/>
    <property type="project" value="UniProtKB-UniRule"/>
</dbReference>
<dbReference type="CDD" id="cd04301">
    <property type="entry name" value="NAT_SF"/>
    <property type="match status" value="2"/>
</dbReference>
<dbReference type="Gene3D" id="3.40.630.30">
    <property type="match status" value="1"/>
</dbReference>
<dbReference type="HAMAP" id="MF_01698">
    <property type="entry name" value="MshD"/>
    <property type="match status" value="1"/>
</dbReference>
<dbReference type="InterPro" id="IPR016181">
    <property type="entry name" value="Acyl_CoA_acyltransferase"/>
</dbReference>
<dbReference type="InterPro" id="IPR050832">
    <property type="entry name" value="Bact_Acetyltransf"/>
</dbReference>
<dbReference type="InterPro" id="IPR000182">
    <property type="entry name" value="GNAT_dom"/>
</dbReference>
<dbReference type="InterPro" id="IPR017813">
    <property type="entry name" value="Mycothiol_AcTrfase"/>
</dbReference>
<dbReference type="NCBIfam" id="TIGR03448">
    <property type="entry name" value="mycothiol_MshD"/>
    <property type="match status" value="1"/>
</dbReference>
<dbReference type="PANTHER" id="PTHR43877">
    <property type="entry name" value="AMINOALKYLPHOSPHONATE N-ACETYLTRANSFERASE-RELATED-RELATED"/>
    <property type="match status" value="1"/>
</dbReference>
<dbReference type="Pfam" id="PF00583">
    <property type="entry name" value="Acetyltransf_1"/>
    <property type="match status" value="1"/>
</dbReference>
<dbReference type="PIRSF" id="PIRSF021524">
    <property type="entry name" value="MSH_acetyltransferase"/>
    <property type="match status" value="1"/>
</dbReference>
<dbReference type="SUPFAM" id="SSF55729">
    <property type="entry name" value="Acyl-CoA N-acyltransferases (Nat)"/>
    <property type="match status" value="1"/>
</dbReference>
<dbReference type="PROSITE" id="PS51186">
    <property type="entry name" value="GNAT"/>
    <property type="match status" value="2"/>
</dbReference>
<organism>
    <name type="scientific">Catenulispora acidiphila (strain DSM 44928 / JCM 14897 / NBRC 102108 / NRRL B-24433 / ID139908)</name>
    <dbReference type="NCBI Taxonomy" id="479433"/>
    <lineage>
        <taxon>Bacteria</taxon>
        <taxon>Bacillati</taxon>
        <taxon>Actinomycetota</taxon>
        <taxon>Actinomycetes</taxon>
        <taxon>Catenulisporales</taxon>
        <taxon>Catenulisporaceae</taxon>
        <taxon>Catenulispora</taxon>
    </lineage>
</organism>
<proteinExistence type="inferred from homology"/>
<comment type="function">
    <text evidence="1">Catalyzes the transfer of acetyl from acetyl-CoA to desacetylmycothiol (Cys-GlcN-Ins) to form mycothiol.</text>
</comment>
<comment type="catalytic activity">
    <reaction evidence="1">
        <text>1D-myo-inositol 2-(L-cysteinylamino)-2-deoxy-alpha-D-glucopyranoside + acetyl-CoA = mycothiol + CoA + H(+)</text>
        <dbReference type="Rhea" id="RHEA:26172"/>
        <dbReference type="ChEBI" id="CHEBI:15378"/>
        <dbReference type="ChEBI" id="CHEBI:16768"/>
        <dbReference type="ChEBI" id="CHEBI:57287"/>
        <dbReference type="ChEBI" id="CHEBI:57288"/>
        <dbReference type="ChEBI" id="CHEBI:58887"/>
        <dbReference type="EC" id="2.3.1.189"/>
    </reaction>
</comment>
<comment type="subunit">
    <text evidence="1">Monomer.</text>
</comment>
<comment type="similarity">
    <text evidence="1">Belongs to the acetyltransferase family. MshD subfamily.</text>
</comment>
<keyword id="KW-0012">Acyltransferase</keyword>
<keyword id="KW-1185">Reference proteome</keyword>
<keyword id="KW-0677">Repeat</keyword>
<keyword id="KW-0808">Transferase</keyword>
<reference key="1">
    <citation type="journal article" date="2009" name="Stand. Genomic Sci.">
        <title>Complete genome sequence of Catenulispora acidiphila type strain (ID 139908).</title>
        <authorList>
            <person name="Copeland A."/>
            <person name="Lapidus A."/>
            <person name="Glavina Del Rio T."/>
            <person name="Nolan M."/>
            <person name="Lucas S."/>
            <person name="Chen F."/>
            <person name="Tice H."/>
            <person name="Cheng J.F."/>
            <person name="Bruce D."/>
            <person name="Goodwin L."/>
            <person name="Pitluck S."/>
            <person name="Mikhailova N."/>
            <person name="Pati A."/>
            <person name="Ivanova N."/>
            <person name="Mavromatis K."/>
            <person name="Chen A."/>
            <person name="Palaniappan K."/>
            <person name="Chain P."/>
            <person name="Land M."/>
            <person name="Hauser L."/>
            <person name="Chang Y.J."/>
            <person name="Jeffries C.D."/>
            <person name="Chertkov O."/>
            <person name="Brettin T."/>
            <person name="Detter J.C."/>
            <person name="Han C."/>
            <person name="Ali Z."/>
            <person name="Tindall B.J."/>
            <person name="Goker M."/>
            <person name="Bristow J."/>
            <person name="Eisen J.A."/>
            <person name="Markowitz V."/>
            <person name="Hugenholtz P."/>
            <person name="Kyrpides N.C."/>
            <person name="Klenk H.P."/>
        </authorList>
    </citation>
    <scope>NUCLEOTIDE SEQUENCE [LARGE SCALE GENOMIC DNA]</scope>
    <source>
        <strain>DSM 44928 / JCM 14897 / NBRC 102108 / NRRL B-24433 / ID139908</strain>
    </source>
</reference>
<name>MSHD_CATAD</name>